<feature type="chain" id="PRO_1000193326" description="Protein RecA">
    <location>
        <begin position="1"/>
        <end position="355"/>
    </location>
</feature>
<feature type="binding site" evidence="1">
    <location>
        <begin position="67"/>
        <end position="74"/>
    </location>
    <ligand>
        <name>ATP</name>
        <dbReference type="ChEBI" id="CHEBI:30616"/>
    </ligand>
</feature>
<name>RECA_SHEB2</name>
<sequence length="355" mass="37898">MKVDPNKEKALAAVLIQIEKQFGKGSIMKLGEDRSMDVETISTGSLSLDVALGAGGLPMGRIVEIYGPESSGKTTLTLEVIAAAQREGKTCAFIDAEHALDPIYAKKLGVDIDNLLCSQPDTGEQALEICDALTRSGAVDVIVVDSVAALTPKAEIEGEIGDSHMGLAARMMSQAMRKLAGNLKQSNTLLIFINQIRMKIGVMFGNPETTTGGNALKFYASVRLDIRRTGAIKDGDEVVGNETRVKVVKNKVAAPFKQAEFQILYGQGINRTGELVDLGVAHKLIEKAGAWYSYKGDKIGQGRANAGKYLTENPAIATEIDKTLRELLLSNPSALAAKADASTEDNVDLETGEVF</sequence>
<accession>B8E8U2</accession>
<proteinExistence type="inferred from homology"/>
<dbReference type="EMBL" id="CP001252">
    <property type="protein sequence ID" value="ACK45758.1"/>
    <property type="molecule type" value="Genomic_DNA"/>
</dbReference>
<dbReference type="RefSeq" id="WP_011847432.1">
    <property type="nucleotide sequence ID" value="NC_011663.1"/>
</dbReference>
<dbReference type="SMR" id="B8E8U2"/>
<dbReference type="KEGG" id="sbp:Sbal223_1248"/>
<dbReference type="HOGENOM" id="CLU_040469_3_2_6"/>
<dbReference type="Proteomes" id="UP000002507">
    <property type="component" value="Chromosome"/>
</dbReference>
<dbReference type="GO" id="GO:0005829">
    <property type="term" value="C:cytosol"/>
    <property type="evidence" value="ECO:0007669"/>
    <property type="project" value="TreeGrafter"/>
</dbReference>
<dbReference type="GO" id="GO:0005524">
    <property type="term" value="F:ATP binding"/>
    <property type="evidence" value="ECO:0007669"/>
    <property type="project" value="UniProtKB-UniRule"/>
</dbReference>
<dbReference type="GO" id="GO:0016887">
    <property type="term" value="F:ATP hydrolysis activity"/>
    <property type="evidence" value="ECO:0007669"/>
    <property type="project" value="InterPro"/>
</dbReference>
<dbReference type="GO" id="GO:0140664">
    <property type="term" value="F:ATP-dependent DNA damage sensor activity"/>
    <property type="evidence" value="ECO:0007669"/>
    <property type="project" value="InterPro"/>
</dbReference>
<dbReference type="GO" id="GO:0003684">
    <property type="term" value="F:damaged DNA binding"/>
    <property type="evidence" value="ECO:0007669"/>
    <property type="project" value="UniProtKB-UniRule"/>
</dbReference>
<dbReference type="GO" id="GO:0003697">
    <property type="term" value="F:single-stranded DNA binding"/>
    <property type="evidence" value="ECO:0007669"/>
    <property type="project" value="UniProtKB-UniRule"/>
</dbReference>
<dbReference type="GO" id="GO:0006310">
    <property type="term" value="P:DNA recombination"/>
    <property type="evidence" value="ECO:0007669"/>
    <property type="project" value="UniProtKB-UniRule"/>
</dbReference>
<dbReference type="GO" id="GO:0006281">
    <property type="term" value="P:DNA repair"/>
    <property type="evidence" value="ECO:0007669"/>
    <property type="project" value="UniProtKB-UniRule"/>
</dbReference>
<dbReference type="GO" id="GO:0009432">
    <property type="term" value="P:SOS response"/>
    <property type="evidence" value="ECO:0007669"/>
    <property type="project" value="UniProtKB-UniRule"/>
</dbReference>
<dbReference type="CDD" id="cd00983">
    <property type="entry name" value="RecA"/>
    <property type="match status" value="1"/>
</dbReference>
<dbReference type="FunFam" id="3.40.50.300:FF:000087">
    <property type="entry name" value="Recombinase RecA"/>
    <property type="match status" value="1"/>
</dbReference>
<dbReference type="Gene3D" id="3.40.50.300">
    <property type="entry name" value="P-loop containing nucleotide triphosphate hydrolases"/>
    <property type="match status" value="1"/>
</dbReference>
<dbReference type="HAMAP" id="MF_00268">
    <property type="entry name" value="RecA"/>
    <property type="match status" value="1"/>
</dbReference>
<dbReference type="InterPro" id="IPR003593">
    <property type="entry name" value="AAA+_ATPase"/>
</dbReference>
<dbReference type="InterPro" id="IPR013765">
    <property type="entry name" value="DNA_recomb/repair_RecA"/>
</dbReference>
<dbReference type="InterPro" id="IPR020584">
    <property type="entry name" value="DNA_recomb/repair_RecA_CS"/>
</dbReference>
<dbReference type="InterPro" id="IPR027417">
    <property type="entry name" value="P-loop_NTPase"/>
</dbReference>
<dbReference type="InterPro" id="IPR049261">
    <property type="entry name" value="RecA-like_C"/>
</dbReference>
<dbReference type="InterPro" id="IPR049428">
    <property type="entry name" value="RecA-like_N"/>
</dbReference>
<dbReference type="InterPro" id="IPR020588">
    <property type="entry name" value="RecA_ATP-bd"/>
</dbReference>
<dbReference type="InterPro" id="IPR023400">
    <property type="entry name" value="RecA_C_sf"/>
</dbReference>
<dbReference type="InterPro" id="IPR020587">
    <property type="entry name" value="RecA_monomer-monomer_interface"/>
</dbReference>
<dbReference type="NCBIfam" id="TIGR02012">
    <property type="entry name" value="tigrfam_recA"/>
    <property type="match status" value="1"/>
</dbReference>
<dbReference type="PANTHER" id="PTHR45900:SF1">
    <property type="entry name" value="MITOCHONDRIAL DNA REPAIR PROTEIN RECA HOMOLOG-RELATED"/>
    <property type="match status" value="1"/>
</dbReference>
<dbReference type="PANTHER" id="PTHR45900">
    <property type="entry name" value="RECA"/>
    <property type="match status" value="1"/>
</dbReference>
<dbReference type="Pfam" id="PF00154">
    <property type="entry name" value="RecA"/>
    <property type="match status" value="1"/>
</dbReference>
<dbReference type="Pfam" id="PF21096">
    <property type="entry name" value="RecA_C"/>
    <property type="match status" value="1"/>
</dbReference>
<dbReference type="PRINTS" id="PR00142">
    <property type="entry name" value="RECA"/>
</dbReference>
<dbReference type="SMART" id="SM00382">
    <property type="entry name" value="AAA"/>
    <property type="match status" value="1"/>
</dbReference>
<dbReference type="SUPFAM" id="SSF52540">
    <property type="entry name" value="P-loop containing nucleoside triphosphate hydrolases"/>
    <property type="match status" value="1"/>
</dbReference>
<dbReference type="SUPFAM" id="SSF54752">
    <property type="entry name" value="RecA protein, C-terminal domain"/>
    <property type="match status" value="1"/>
</dbReference>
<dbReference type="PROSITE" id="PS00321">
    <property type="entry name" value="RECA_1"/>
    <property type="match status" value="1"/>
</dbReference>
<dbReference type="PROSITE" id="PS50162">
    <property type="entry name" value="RECA_2"/>
    <property type="match status" value="1"/>
</dbReference>
<dbReference type="PROSITE" id="PS50163">
    <property type="entry name" value="RECA_3"/>
    <property type="match status" value="1"/>
</dbReference>
<organism>
    <name type="scientific">Shewanella baltica (strain OS223)</name>
    <dbReference type="NCBI Taxonomy" id="407976"/>
    <lineage>
        <taxon>Bacteria</taxon>
        <taxon>Pseudomonadati</taxon>
        <taxon>Pseudomonadota</taxon>
        <taxon>Gammaproteobacteria</taxon>
        <taxon>Alteromonadales</taxon>
        <taxon>Shewanellaceae</taxon>
        <taxon>Shewanella</taxon>
    </lineage>
</organism>
<gene>
    <name evidence="1" type="primary">recA</name>
    <name type="ordered locus">Sbal223_1248</name>
</gene>
<comment type="function">
    <text evidence="1">Can catalyze the hydrolysis of ATP in the presence of single-stranded DNA, the ATP-dependent uptake of single-stranded DNA by duplex DNA, and the ATP-dependent hybridization of homologous single-stranded DNAs. It interacts with LexA causing its activation and leading to its autocatalytic cleavage.</text>
</comment>
<comment type="subcellular location">
    <subcellularLocation>
        <location evidence="1">Cytoplasm</location>
    </subcellularLocation>
</comment>
<comment type="similarity">
    <text evidence="1">Belongs to the RecA family.</text>
</comment>
<protein>
    <recommendedName>
        <fullName evidence="1">Protein RecA</fullName>
    </recommendedName>
    <alternativeName>
        <fullName evidence="1">Recombinase A</fullName>
    </alternativeName>
</protein>
<evidence type="ECO:0000255" key="1">
    <source>
        <dbReference type="HAMAP-Rule" id="MF_00268"/>
    </source>
</evidence>
<reference key="1">
    <citation type="submission" date="2008-12" db="EMBL/GenBank/DDBJ databases">
        <title>Complete sequence of chromosome of Shewanella baltica OS223.</title>
        <authorList>
            <consortium name="US DOE Joint Genome Institute"/>
            <person name="Lucas S."/>
            <person name="Copeland A."/>
            <person name="Lapidus A."/>
            <person name="Glavina del Rio T."/>
            <person name="Dalin E."/>
            <person name="Tice H."/>
            <person name="Bruce D."/>
            <person name="Goodwin L."/>
            <person name="Pitluck S."/>
            <person name="Chertkov O."/>
            <person name="Meincke L."/>
            <person name="Brettin T."/>
            <person name="Detter J.C."/>
            <person name="Han C."/>
            <person name="Kuske C.R."/>
            <person name="Larimer F."/>
            <person name="Land M."/>
            <person name="Hauser L."/>
            <person name="Kyrpides N."/>
            <person name="Ovchinnikova G."/>
            <person name="Brettar I."/>
            <person name="Rodrigues J."/>
            <person name="Konstantinidis K."/>
            <person name="Tiedje J."/>
        </authorList>
    </citation>
    <scope>NUCLEOTIDE SEQUENCE [LARGE SCALE GENOMIC DNA]</scope>
    <source>
        <strain>OS223</strain>
    </source>
</reference>
<keyword id="KW-0067">ATP-binding</keyword>
<keyword id="KW-0963">Cytoplasm</keyword>
<keyword id="KW-0227">DNA damage</keyword>
<keyword id="KW-0233">DNA recombination</keyword>
<keyword id="KW-0234">DNA repair</keyword>
<keyword id="KW-0238">DNA-binding</keyword>
<keyword id="KW-0547">Nucleotide-binding</keyword>
<keyword id="KW-0742">SOS response</keyword>